<protein>
    <recommendedName>
        <fullName evidence="1">GMP synthase [glutamine-hydrolyzing] subunit B</fullName>
        <ecNumber evidence="1">6.3.5.2</ecNumber>
    </recommendedName>
    <alternativeName>
        <fullName evidence="1">GMP synthetase</fullName>
    </alternativeName>
</protein>
<organism>
    <name type="scientific">Methanococcus maripaludis (strain C7 / ATCC BAA-1331)</name>
    <dbReference type="NCBI Taxonomy" id="426368"/>
    <lineage>
        <taxon>Archaea</taxon>
        <taxon>Methanobacteriati</taxon>
        <taxon>Methanobacteriota</taxon>
        <taxon>Methanomada group</taxon>
        <taxon>Methanococci</taxon>
        <taxon>Methanococcales</taxon>
        <taxon>Methanococcaceae</taxon>
        <taxon>Methanococcus</taxon>
    </lineage>
</organism>
<gene>
    <name evidence="1" type="primary">guaAB</name>
    <name type="ordered locus">MmarC7_0142</name>
</gene>
<name>GUAAB_METM7</name>
<dbReference type="EC" id="6.3.5.2" evidence="1"/>
<dbReference type="EMBL" id="CP000745">
    <property type="protein sequence ID" value="ABR65212.1"/>
    <property type="molecule type" value="Genomic_DNA"/>
</dbReference>
<dbReference type="SMR" id="A6VFI6"/>
<dbReference type="STRING" id="426368.MmarC7_0142"/>
<dbReference type="KEGG" id="mmz:MmarC7_0142"/>
<dbReference type="eggNOG" id="arCOG00085">
    <property type="taxonomic scope" value="Archaea"/>
</dbReference>
<dbReference type="HOGENOM" id="CLU_014340_0_0_2"/>
<dbReference type="OrthoDB" id="33844at2157"/>
<dbReference type="UniPathway" id="UPA00189">
    <property type="reaction ID" value="UER00296"/>
</dbReference>
<dbReference type="GO" id="GO:0005829">
    <property type="term" value="C:cytosol"/>
    <property type="evidence" value="ECO:0007669"/>
    <property type="project" value="TreeGrafter"/>
</dbReference>
<dbReference type="GO" id="GO:0005524">
    <property type="term" value="F:ATP binding"/>
    <property type="evidence" value="ECO:0007669"/>
    <property type="project" value="UniProtKB-UniRule"/>
</dbReference>
<dbReference type="GO" id="GO:0003921">
    <property type="term" value="F:GMP synthase activity"/>
    <property type="evidence" value="ECO:0007669"/>
    <property type="project" value="InterPro"/>
</dbReference>
<dbReference type="CDD" id="cd01997">
    <property type="entry name" value="GMP_synthase_C"/>
    <property type="match status" value="1"/>
</dbReference>
<dbReference type="FunFam" id="3.30.300.10:FF:000002">
    <property type="entry name" value="GMP synthase [glutamine-hydrolyzing]"/>
    <property type="match status" value="1"/>
</dbReference>
<dbReference type="Gene3D" id="3.30.300.10">
    <property type="match status" value="1"/>
</dbReference>
<dbReference type="Gene3D" id="3.40.50.620">
    <property type="entry name" value="HUPs"/>
    <property type="match status" value="1"/>
</dbReference>
<dbReference type="HAMAP" id="MF_00345">
    <property type="entry name" value="GMP_synthase_B"/>
    <property type="match status" value="1"/>
</dbReference>
<dbReference type="InterPro" id="IPR001674">
    <property type="entry name" value="GMP_synth_C"/>
</dbReference>
<dbReference type="InterPro" id="IPR026598">
    <property type="entry name" value="GMP_synthase_B"/>
</dbReference>
<dbReference type="InterPro" id="IPR025777">
    <property type="entry name" value="GMPS_ATP_PPase_dom"/>
</dbReference>
<dbReference type="InterPro" id="IPR022310">
    <property type="entry name" value="NAD/GMP_synthase"/>
</dbReference>
<dbReference type="InterPro" id="IPR014729">
    <property type="entry name" value="Rossmann-like_a/b/a_fold"/>
</dbReference>
<dbReference type="NCBIfam" id="TIGR00884">
    <property type="entry name" value="guaA_Cterm"/>
    <property type="match status" value="1"/>
</dbReference>
<dbReference type="PANTHER" id="PTHR11922:SF2">
    <property type="entry name" value="GMP SYNTHASE [GLUTAMINE-HYDROLYZING]"/>
    <property type="match status" value="1"/>
</dbReference>
<dbReference type="PANTHER" id="PTHR11922">
    <property type="entry name" value="GMP SYNTHASE-RELATED"/>
    <property type="match status" value="1"/>
</dbReference>
<dbReference type="Pfam" id="PF00958">
    <property type="entry name" value="GMP_synt_C"/>
    <property type="match status" value="1"/>
</dbReference>
<dbReference type="Pfam" id="PF02540">
    <property type="entry name" value="NAD_synthase"/>
    <property type="match status" value="1"/>
</dbReference>
<dbReference type="SUPFAM" id="SSF52402">
    <property type="entry name" value="Adenine nucleotide alpha hydrolases-like"/>
    <property type="match status" value="1"/>
</dbReference>
<dbReference type="PROSITE" id="PS51553">
    <property type="entry name" value="GMPS_ATP_PPASE"/>
    <property type="match status" value="1"/>
</dbReference>
<accession>A6VFI6</accession>
<sequence length="310" mass="34943">MFKTEPFIEESIEEIRKQIDNRRTIIALSGGVDSSVAAVLADRAIGDKLLAVYVDTGLMRKNESEEIWKIFKEQMGLNLKIVEAKDIFLKELEGVIDPEEKRKIIGRLFIEVFEKVAEEQGEEVLVQGTIAPDWIESEGQIKTHHNIALPGGMVLDVVEPLRELYKDEVRLLAEALGLPDQIAHRQPFPGPGLAVRILGEITDEKLAICKEANFIVSEEIEKTELKNELWQYFAAVLDTKATGVKGDIRDYNWVVALRFVSSLDAMTAHTPEIPFDLIKRISKRITSEIPNVTRVVLDVTDKPPATIEFE</sequence>
<comment type="function">
    <text evidence="1">Catalyzes the synthesis of GMP from XMP.</text>
</comment>
<comment type="catalytic activity">
    <reaction evidence="1">
        <text>XMP + L-glutamine + ATP + H2O = GMP + L-glutamate + AMP + diphosphate + 2 H(+)</text>
        <dbReference type="Rhea" id="RHEA:11680"/>
        <dbReference type="ChEBI" id="CHEBI:15377"/>
        <dbReference type="ChEBI" id="CHEBI:15378"/>
        <dbReference type="ChEBI" id="CHEBI:29985"/>
        <dbReference type="ChEBI" id="CHEBI:30616"/>
        <dbReference type="ChEBI" id="CHEBI:33019"/>
        <dbReference type="ChEBI" id="CHEBI:57464"/>
        <dbReference type="ChEBI" id="CHEBI:58115"/>
        <dbReference type="ChEBI" id="CHEBI:58359"/>
        <dbReference type="ChEBI" id="CHEBI:456215"/>
        <dbReference type="EC" id="6.3.5.2"/>
    </reaction>
</comment>
<comment type="pathway">
    <text evidence="1">Purine metabolism; GMP biosynthesis; GMP from XMP (L-Gln route): step 1/1.</text>
</comment>
<comment type="subunit">
    <text evidence="1">Heterodimer composed of a glutamine amidotransferase subunit (A) and a GMP-binding subunit (B).</text>
</comment>
<proteinExistence type="inferred from homology"/>
<feature type="chain" id="PRO_1000048378" description="GMP synthase [glutamine-hydrolyzing] subunit B">
    <location>
        <begin position="1"/>
        <end position="310"/>
    </location>
</feature>
<feature type="domain" description="GMPS ATP-PPase" evidence="1">
    <location>
        <begin position="2"/>
        <end position="185"/>
    </location>
</feature>
<feature type="binding site" evidence="1">
    <location>
        <begin position="29"/>
        <end position="35"/>
    </location>
    <ligand>
        <name>ATP</name>
        <dbReference type="ChEBI" id="CHEBI:30616"/>
    </ligand>
</feature>
<keyword id="KW-0067">ATP-binding</keyword>
<keyword id="KW-0332">GMP biosynthesis</keyword>
<keyword id="KW-0436">Ligase</keyword>
<keyword id="KW-0547">Nucleotide-binding</keyword>
<keyword id="KW-0658">Purine biosynthesis</keyword>
<evidence type="ECO:0000255" key="1">
    <source>
        <dbReference type="HAMAP-Rule" id="MF_00345"/>
    </source>
</evidence>
<reference key="1">
    <citation type="submission" date="2007-06" db="EMBL/GenBank/DDBJ databases">
        <title>Complete sequence of Methanococcus maripaludis C7.</title>
        <authorList>
            <consortium name="US DOE Joint Genome Institute"/>
            <person name="Copeland A."/>
            <person name="Lucas S."/>
            <person name="Lapidus A."/>
            <person name="Barry K."/>
            <person name="Glavina del Rio T."/>
            <person name="Dalin E."/>
            <person name="Tice H."/>
            <person name="Pitluck S."/>
            <person name="Clum A."/>
            <person name="Schmutz J."/>
            <person name="Larimer F."/>
            <person name="Land M."/>
            <person name="Hauser L."/>
            <person name="Kyrpides N."/>
            <person name="Anderson I."/>
            <person name="Sieprawska-Lupa M."/>
            <person name="Whitman W.B."/>
            <person name="Richardson P."/>
        </authorList>
    </citation>
    <scope>NUCLEOTIDE SEQUENCE [LARGE SCALE GENOMIC DNA]</scope>
    <source>
        <strain>C7 / ATCC BAA-1331</strain>
    </source>
</reference>